<feature type="chain" id="PRO_1000200019" description="Putative manganese efflux pump MntP">
    <location>
        <begin position="1"/>
        <end position="189"/>
    </location>
</feature>
<feature type="transmembrane region" description="Helical" evidence="1">
    <location>
        <begin position="6"/>
        <end position="26"/>
    </location>
</feature>
<feature type="transmembrane region" description="Helical" evidence="1">
    <location>
        <begin position="39"/>
        <end position="59"/>
    </location>
</feature>
<feature type="transmembrane region" description="Helical" evidence="1">
    <location>
        <begin position="71"/>
        <end position="91"/>
    </location>
</feature>
<feature type="transmembrane region" description="Helical" evidence="1">
    <location>
        <begin position="106"/>
        <end position="126"/>
    </location>
</feature>
<feature type="transmembrane region" description="Helical" evidence="1">
    <location>
        <begin position="131"/>
        <end position="151"/>
    </location>
</feature>
<feature type="transmembrane region" description="Helical" evidence="1">
    <location>
        <begin position="169"/>
        <end position="189"/>
    </location>
</feature>
<protein>
    <recommendedName>
        <fullName evidence="1">Putative manganese efflux pump MntP</fullName>
    </recommendedName>
</protein>
<proteinExistence type="inferred from homology"/>
<keyword id="KW-0997">Cell inner membrane</keyword>
<keyword id="KW-1003">Cell membrane</keyword>
<keyword id="KW-0406">Ion transport</keyword>
<keyword id="KW-0464">Manganese</keyword>
<keyword id="KW-0472">Membrane</keyword>
<keyword id="KW-1185">Reference proteome</keyword>
<keyword id="KW-0812">Transmembrane</keyword>
<keyword id="KW-1133">Transmembrane helix</keyword>
<keyword id="KW-0813">Transport</keyword>
<reference key="1">
    <citation type="submission" date="2007-10" db="EMBL/GenBank/DDBJ databases">
        <title>Complete sequence of Desulfococcus oleovorans Hxd3.</title>
        <authorList>
            <consortium name="US DOE Joint Genome Institute"/>
            <person name="Copeland A."/>
            <person name="Lucas S."/>
            <person name="Lapidus A."/>
            <person name="Barry K."/>
            <person name="Glavina del Rio T."/>
            <person name="Dalin E."/>
            <person name="Tice H."/>
            <person name="Pitluck S."/>
            <person name="Kiss H."/>
            <person name="Brettin T."/>
            <person name="Bruce D."/>
            <person name="Detter J.C."/>
            <person name="Han C."/>
            <person name="Schmutz J."/>
            <person name="Larimer F."/>
            <person name="Land M."/>
            <person name="Hauser L."/>
            <person name="Kyrpides N."/>
            <person name="Kim E."/>
            <person name="Wawrik B."/>
            <person name="Richardson P."/>
        </authorList>
    </citation>
    <scope>NUCLEOTIDE SEQUENCE [LARGE SCALE GENOMIC DNA]</scope>
    <source>
        <strain>DSM 6200 / JCM 39069 / Hxd3</strain>
    </source>
</reference>
<sequence length="189" mass="20685">MNTLTIFGIAVALAMDAFAVSIAAGVFLRSIGLRHYFRLAWHFGLFQALMPIVGWYAGLSVRGLIERYDHWIAFFLLAFVSFNMIRESFDAGENHTKADPTRGLRLVLLSIATSIDALAVGLSLSVLNVSVWMPATVIGITAAVFTVGGLMMGSRAGDIPWLRRYADRVGAGVLLFIGLRILYAHGVFY</sequence>
<evidence type="ECO:0000255" key="1">
    <source>
        <dbReference type="HAMAP-Rule" id="MF_01521"/>
    </source>
</evidence>
<comment type="function">
    <text evidence="1">Probably functions as a manganese efflux pump.</text>
</comment>
<comment type="subcellular location">
    <subcellularLocation>
        <location evidence="1">Cell inner membrane</location>
        <topology evidence="1">Multi-pass membrane protein</topology>
    </subcellularLocation>
</comment>
<comment type="similarity">
    <text evidence="1">Belongs to the MntP (TC 9.B.29) family.</text>
</comment>
<accession>A8ZZT5</accession>
<gene>
    <name evidence="1" type="primary">mntP</name>
    <name type="ordered locus">Dole_1531</name>
</gene>
<dbReference type="EMBL" id="CP000859">
    <property type="protein sequence ID" value="ABW67335.1"/>
    <property type="molecule type" value="Genomic_DNA"/>
</dbReference>
<dbReference type="RefSeq" id="WP_012174951.1">
    <property type="nucleotide sequence ID" value="NC_009943.1"/>
</dbReference>
<dbReference type="STRING" id="96561.Dole_1531"/>
<dbReference type="KEGG" id="dol:Dole_1531"/>
<dbReference type="eggNOG" id="COG1971">
    <property type="taxonomic scope" value="Bacteria"/>
</dbReference>
<dbReference type="HOGENOM" id="CLU_096410_3_0_7"/>
<dbReference type="OrthoDB" id="9811590at2"/>
<dbReference type="Proteomes" id="UP000008561">
    <property type="component" value="Chromosome"/>
</dbReference>
<dbReference type="GO" id="GO:0005886">
    <property type="term" value="C:plasma membrane"/>
    <property type="evidence" value="ECO:0007669"/>
    <property type="project" value="UniProtKB-SubCell"/>
</dbReference>
<dbReference type="GO" id="GO:0005384">
    <property type="term" value="F:manganese ion transmembrane transporter activity"/>
    <property type="evidence" value="ECO:0007669"/>
    <property type="project" value="UniProtKB-UniRule"/>
</dbReference>
<dbReference type="HAMAP" id="MF_01521">
    <property type="entry name" value="MntP_pump"/>
    <property type="match status" value="1"/>
</dbReference>
<dbReference type="InterPro" id="IPR003810">
    <property type="entry name" value="Mntp/YtaF"/>
</dbReference>
<dbReference type="InterPro" id="IPR022929">
    <property type="entry name" value="Put_MntP"/>
</dbReference>
<dbReference type="PANTHER" id="PTHR35529">
    <property type="entry name" value="MANGANESE EFFLUX PUMP MNTP-RELATED"/>
    <property type="match status" value="1"/>
</dbReference>
<dbReference type="PANTHER" id="PTHR35529:SF1">
    <property type="entry name" value="MANGANESE EFFLUX PUMP MNTP-RELATED"/>
    <property type="match status" value="1"/>
</dbReference>
<dbReference type="Pfam" id="PF02659">
    <property type="entry name" value="Mntp"/>
    <property type="match status" value="1"/>
</dbReference>
<organism>
    <name type="scientific">Desulfosudis oleivorans (strain DSM 6200 / JCM 39069 / Hxd3)</name>
    <name type="common">Desulfococcus oleovorans</name>
    <dbReference type="NCBI Taxonomy" id="96561"/>
    <lineage>
        <taxon>Bacteria</taxon>
        <taxon>Pseudomonadati</taxon>
        <taxon>Thermodesulfobacteriota</taxon>
        <taxon>Desulfobacteria</taxon>
        <taxon>Desulfobacterales</taxon>
        <taxon>Desulfosudaceae</taxon>
        <taxon>Desulfosudis</taxon>
    </lineage>
</organism>
<name>MNTP_DESOH</name>